<reference key="1">
    <citation type="submission" date="2007-11" db="EMBL/GenBank/DDBJ databases">
        <title>NISC comparative sequencing initiative.</title>
        <authorList>
            <person name="Antonellis A."/>
            <person name="Benjamin B."/>
            <person name="Blakesley R.W."/>
            <person name="Bouffard G.G."/>
            <person name="Brinkley C."/>
            <person name="Brooks S."/>
            <person name="Chu G."/>
            <person name="Chub I."/>
            <person name="Coleman H."/>
            <person name="Fuksenko T."/>
            <person name="Gestole M."/>
            <person name="Gregory M."/>
            <person name="Guan X."/>
            <person name="Gupta J."/>
            <person name="Gurson N."/>
            <person name="Han E."/>
            <person name="Han J."/>
            <person name="Hansen N."/>
            <person name="Hargrove A."/>
            <person name="Hines-Harris K."/>
            <person name="Ho S.-L."/>
            <person name="Hu P."/>
            <person name="Hunter G."/>
            <person name="Hurle B."/>
            <person name="Idol J.R."/>
            <person name="Johnson T."/>
            <person name="Knight E."/>
            <person name="Kwong P."/>
            <person name="Lee-Lin S.-Q."/>
            <person name="Legaspi R."/>
            <person name="Madden M."/>
            <person name="Maduro Q.L."/>
            <person name="Maduro V.B."/>
            <person name="Margulies E.H."/>
            <person name="Masiello C."/>
            <person name="Maskeri B."/>
            <person name="McDowell J."/>
            <person name="Merkulov G."/>
            <person name="Montemayor C."/>
            <person name="Mullikin J.C."/>
            <person name="Park M."/>
            <person name="Prasad A."/>
            <person name="Ramsahoye C."/>
            <person name="Reddix-Dugue N."/>
            <person name="Riebow N."/>
            <person name="Schandler K."/>
            <person name="Schueler M.G."/>
            <person name="Sison C."/>
            <person name="Smith L."/>
            <person name="Stantripop S."/>
            <person name="Thomas J.W."/>
            <person name="Thomas P.J."/>
            <person name="Tsipouri V."/>
            <person name="Young A."/>
            <person name="Green E.D."/>
        </authorList>
    </citation>
    <scope>NUCLEOTIDE SEQUENCE [LARGE SCALE GENOMIC DNA]</scope>
</reference>
<sequence length="106" mass="12517">MVNVPKTRQTFCKKYDKHQPHKVTQYKKGKDSLYALGKRRYDRKQSGYGGHTKPIFWKKAKTTKKIVLRLECVEPNCRSERMLATKRCKHFELGGDKTRKGQVIQF</sequence>
<comment type="function">
    <text evidence="1">Component of the large ribosomal subunit. The ribosome is a large ribonucleoprotein complex responsible for the synthesis of proteins in the cell.</text>
</comment>
<comment type="subunit">
    <text evidence="1">Component of the large ribosomal subunit.</text>
</comment>
<comment type="subcellular location">
    <subcellularLocation>
        <location evidence="1">Cytoplasm</location>
    </subcellularLocation>
</comment>
<comment type="similarity">
    <text evidence="2">Belongs to the eukaryotic ribosomal protein eL42 family.</text>
</comment>
<dbReference type="EMBL" id="DP000508">
    <property type="protein sequence ID" value="ABX52211.1"/>
    <property type="molecule type" value="Genomic_DNA"/>
</dbReference>
<dbReference type="RefSeq" id="NP_001162375.1">
    <property type="nucleotide sequence ID" value="NM_001168904.1"/>
</dbReference>
<dbReference type="SMR" id="A9L948"/>
<dbReference type="STRING" id="9555.ENSPANP00000000189"/>
<dbReference type="Ensembl" id="ENSPANT00000069092.1">
    <property type="protein sequence ID" value="ENSPANP00000060972.1"/>
    <property type="gene ID" value="ENSPANG00000048580.1"/>
</dbReference>
<dbReference type="GeneID" id="100137368"/>
<dbReference type="KEGG" id="panu:100137368"/>
<dbReference type="CTD" id="6166"/>
<dbReference type="eggNOG" id="KOG3464">
    <property type="taxonomic scope" value="Eukaryota"/>
</dbReference>
<dbReference type="GeneTree" id="ENSGT00390000018085"/>
<dbReference type="OMA" id="NCRSERM"/>
<dbReference type="OrthoDB" id="10225at314294"/>
<dbReference type="Proteomes" id="UP000028761">
    <property type="component" value="Chromosome 12"/>
</dbReference>
<dbReference type="GO" id="GO:0005737">
    <property type="term" value="C:cytoplasm"/>
    <property type="evidence" value="ECO:0007669"/>
    <property type="project" value="UniProtKB-SubCell"/>
</dbReference>
<dbReference type="GO" id="GO:1990904">
    <property type="term" value="C:ribonucleoprotein complex"/>
    <property type="evidence" value="ECO:0007669"/>
    <property type="project" value="UniProtKB-KW"/>
</dbReference>
<dbReference type="GO" id="GO:0005840">
    <property type="term" value="C:ribosome"/>
    <property type="evidence" value="ECO:0007669"/>
    <property type="project" value="UniProtKB-KW"/>
</dbReference>
<dbReference type="GO" id="GO:0003735">
    <property type="term" value="F:structural constituent of ribosome"/>
    <property type="evidence" value="ECO:0007669"/>
    <property type="project" value="InterPro"/>
</dbReference>
<dbReference type="GO" id="GO:0006412">
    <property type="term" value="P:translation"/>
    <property type="evidence" value="ECO:0007669"/>
    <property type="project" value="InterPro"/>
</dbReference>
<dbReference type="FunFam" id="3.10.450.80:FF:000001">
    <property type="entry name" value="60S ribosomal protein L44"/>
    <property type="match status" value="1"/>
</dbReference>
<dbReference type="Gene3D" id="3.10.450.80">
    <property type="match status" value="1"/>
</dbReference>
<dbReference type="InterPro" id="IPR000552">
    <property type="entry name" value="Ribosomal_eL44"/>
</dbReference>
<dbReference type="InterPro" id="IPR053708">
    <property type="entry name" value="Ribosomal_LSU_eL42"/>
</dbReference>
<dbReference type="InterPro" id="IPR011332">
    <property type="entry name" value="Ribosomal_zn-bd"/>
</dbReference>
<dbReference type="PANTHER" id="PTHR10369">
    <property type="entry name" value="60S RIBOSOMAL PROTEIN L36A/L44"/>
    <property type="match status" value="1"/>
</dbReference>
<dbReference type="Pfam" id="PF00935">
    <property type="entry name" value="Ribosomal_L44"/>
    <property type="match status" value="1"/>
</dbReference>
<dbReference type="SUPFAM" id="SSF57829">
    <property type="entry name" value="Zn-binding ribosomal proteins"/>
    <property type="match status" value="1"/>
</dbReference>
<dbReference type="PROSITE" id="PS01172">
    <property type="entry name" value="RIBOSOMAL_L44E"/>
    <property type="match status" value="1"/>
</dbReference>
<organism>
    <name type="scientific">Papio anubis</name>
    <name type="common">Olive baboon</name>
    <dbReference type="NCBI Taxonomy" id="9555"/>
    <lineage>
        <taxon>Eukaryota</taxon>
        <taxon>Metazoa</taxon>
        <taxon>Chordata</taxon>
        <taxon>Craniata</taxon>
        <taxon>Vertebrata</taxon>
        <taxon>Euteleostomi</taxon>
        <taxon>Mammalia</taxon>
        <taxon>Eutheria</taxon>
        <taxon>Euarchontoglires</taxon>
        <taxon>Primates</taxon>
        <taxon>Haplorrhini</taxon>
        <taxon>Catarrhini</taxon>
        <taxon>Cercopithecidae</taxon>
        <taxon>Cercopithecinae</taxon>
        <taxon>Papio</taxon>
    </lineage>
</organism>
<name>RL36A_PAPAN</name>
<proteinExistence type="inferred from homology"/>
<evidence type="ECO:0000250" key="1">
    <source>
        <dbReference type="UniProtKB" id="P83881"/>
    </source>
</evidence>
<evidence type="ECO:0000305" key="2"/>
<gene>
    <name type="primary">RPL36A</name>
</gene>
<accession>A9L948</accession>
<keyword id="KW-0963">Cytoplasm</keyword>
<keyword id="KW-1185">Reference proteome</keyword>
<keyword id="KW-0687">Ribonucleoprotein</keyword>
<keyword id="KW-0689">Ribosomal protein</keyword>
<protein>
    <recommendedName>
        <fullName evidence="2">Large ribosomal subunit protein eL42</fullName>
    </recommendedName>
    <alternativeName>
        <fullName>60S ribosomal protein L36a</fullName>
    </alternativeName>
</protein>
<feature type="chain" id="PRO_0000319310" description="Large ribosomal subunit protein eL42">
    <location>
        <begin position="1"/>
        <end position="106"/>
    </location>
</feature>